<proteinExistence type="inferred from homology"/>
<geneLocation type="chloroplast"/>
<accession>Q6EMB0</accession>
<reference key="1">
    <citation type="submission" date="2003-02" db="EMBL/GenBank/DDBJ databases">
        <title>Parsing out signal and noise for seed-plant phylogenetic inference.</title>
        <authorList>
            <person name="Graham S.W."/>
            <person name="Rai H.S."/>
            <person name="Ikegami K."/>
            <person name="Reeves P.A."/>
            <person name="Olmstead R.G."/>
        </authorList>
    </citation>
    <scope>NUCLEOTIDE SEQUENCE [GENOMIC DNA]</scope>
</reference>
<feature type="chain" id="PRO_0000124426" description="Small ribosomal subunit protein uS7c">
    <location>
        <begin position="1"/>
        <end position="155"/>
    </location>
</feature>
<keyword id="KW-0150">Chloroplast</keyword>
<keyword id="KW-0934">Plastid</keyword>
<keyword id="KW-0687">Ribonucleoprotein</keyword>
<keyword id="KW-0689">Ribosomal protein</keyword>
<keyword id="KW-0694">RNA-binding</keyword>
<keyword id="KW-0699">rRNA-binding</keyword>
<protein>
    <recommendedName>
        <fullName evidence="2">Small ribosomal subunit protein uS7c</fullName>
    </recommendedName>
    <alternativeName>
        <fullName>30S ribosomal protein S7, chloroplastic</fullName>
    </alternativeName>
</protein>
<evidence type="ECO:0000250" key="1"/>
<evidence type="ECO:0000305" key="2"/>
<name>RR7_ARIMA</name>
<sequence>MSRRGTAEEKTAKSDPIYRNRLVNMLVNRILKHGKKSLAYQIIYRAVKKIQQKTETNPLSVLRQAIRGVTPDIAVKARRVGGSTHQVPIEIGSTQGKALAIRWLLGASRKRPGRNMAFKLSSELVDAAKGSGDAIRKKEETHKMAXANRAFAHFR</sequence>
<organism>
    <name type="scientific">Aristolochia macrophylla</name>
    <name type="common">Dutchman's pipe vine</name>
    <name type="synonym">Isotrema macrophyllum</name>
    <dbReference type="NCBI Taxonomy" id="12949"/>
    <lineage>
        <taxon>Eukaryota</taxon>
        <taxon>Viridiplantae</taxon>
        <taxon>Streptophyta</taxon>
        <taxon>Embryophyta</taxon>
        <taxon>Tracheophyta</taxon>
        <taxon>Spermatophyta</taxon>
        <taxon>Magnoliopsida</taxon>
        <taxon>Magnoliidae</taxon>
        <taxon>Piperales</taxon>
        <taxon>Aristolochiaceae</taxon>
        <taxon>Aristolochia</taxon>
    </lineage>
</organism>
<comment type="function">
    <text evidence="1">One of the primary rRNA binding proteins, it binds directly to 16S rRNA where it nucleates assembly of the head domain of the 30S subunit.</text>
</comment>
<comment type="subunit">
    <text>Part of the 30S ribosomal subunit.</text>
</comment>
<comment type="subcellular location">
    <subcellularLocation>
        <location>Plastid</location>
        <location>Chloroplast</location>
    </subcellularLocation>
</comment>
<comment type="similarity">
    <text evidence="2">Belongs to the universal ribosomal protein uS7 family.</text>
</comment>
<gene>
    <name type="primary">rps7</name>
</gene>
<dbReference type="EMBL" id="AY237131">
    <property type="protein sequence ID" value="AAQ64531.1"/>
    <property type="molecule type" value="Genomic_DNA"/>
</dbReference>
<dbReference type="GO" id="GO:0009507">
    <property type="term" value="C:chloroplast"/>
    <property type="evidence" value="ECO:0007669"/>
    <property type="project" value="UniProtKB-SubCell"/>
</dbReference>
<dbReference type="GO" id="GO:0015935">
    <property type="term" value="C:small ribosomal subunit"/>
    <property type="evidence" value="ECO:0007669"/>
    <property type="project" value="InterPro"/>
</dbReference>
<dbReference type="GO" id="GO:0019843">
    <property type="term" value="F:rRNA binding"/>
    <property type="evidence" value="ECO:0007669"/>
    <property type="project" value="UniProtKB-UniRule"/>
</dbReference>
<dbReference type="GO" id="GO:0003735">
    <property type="term" value="F:structural constituent of ribosome"/>
    <property type="evidence" value="ECO:0007669"/>
    <property type="project" value="InterPro"/>
</dbReference>
<dbReference type="GO" id="GO:0006412">
    <property type="term" value="P:translation"/>
    <property type="evidence" value="ECO:0007669"/>
    <property type="project" value="UniProtKB-UniRule"/>
</dbReference>
<dbReference type="CDD" id="cd14871">
    <property type="entry name" value="uS7_Chloroplast"/>
    <property type="match status" value="1"/>
</dbReference>
<dbReference type="FunFam" id="1.10.455.10:FF:000001">
    <property type="entry name" value="30S ribosomal protein S7"/>
    <property type="match status" value="1"/>
</dbReference>
<dbReference type="Gene3D" id="1.10.455.10">
    <property type="entry name" value="Ribosomal protein S7 domain"/>
    <property type="match status" value="1"/>
</dbReference>
<dbReference type="HAMAP" id="MF_00480_B">
    <property type="entry name" value="Ribosomal_uS7_B"/>
    <property type="match status" value="1"/>
</dbReference>
<dbReference type="InterPro" id="IPR000235">
    <property type="entry name" value="Ribosomal_uS7"/>
</dbReference>
<dbReference type="InterPro" id="IPR005717">
    <property type="entry name" value="Ribosomal_uS7_bac/org-type"/>
</dbReference>
<dbReference type="InterPro" id="IPR020606">
    <property type="entry name" value="Ribosomal_uS7_CS"/>
</dbReference>
<dbReference type="InterPro" id="IPR023798">
    <property type="entry name" value="Ribosomal_uS7_dom"/>
</dbReference>
<dbReference type="InterPro" id="IPR036823">
    <property type="entry name" value="Ribosomal_uS7_dom_sf"/>
</dbReference>
<dbReference type="NCBIfam" id="TIGR01029">
    <property type="entry name" value="rpsG_bact"/>
    <property type="match status" value="1"/>
</dbReference>
<dbReference type="PANTHER" id="PTHR11205">
    <property type="entry name" value="RIBOSOMAL PROTEIN S7"/>
    <property type="match status" value="1"/>
</dbReference>
<dbReference type="Pfam" id="PF00177">
    <property type="entry name" value="Ribosomal_S7"/>
    <property type="match status" value="1"/>
</dbReference>
<dbReference type="PIRSF" id="PIRSF002122">
    <property type="entry name" value="RPS7p_RPS7a_RPS5e_RPS7o"/>
    <property type="match status" value="1"/>
</dbReference>
<dbReference type="SUPFAM" id="SSF47973">
    <property type="entry name" value="Ribosomal protein S7"/>
    <property type="match status" value="1"/>
</dbReference>
<dbReference type="PROSITE" id="PS00052">
    <property type="entry name" value="RIBOSOMAL_S7"/>
    <property type="match status" value="1"/>
</dbReference>